<organism>
    <name type="scientific">Oleidesulfovibrio alaskensis (strain ATCC BAA-1058 / DSM 17464 / G20)</name>
    <name type="common">Desulfovibrio alaskensis</name>
    <dbReference type="NCBI Taxonomy" id="207559"/>
    <lineage>
        <taxon>Bacteria</taxon>
        <taxon>Pseudomonadati</taxon>
        <taxon>Thermodesulfobacteriota</taxon>
        <taxon>Desulfovibrionia</taxon>
        <taxon>Desulfovibrionales</taxon>
        <taxon>Desulfovibrionaceae</taxon>
        <taxon>Oleidesulfovibrio</taxon>
    </lineage>
</organism>
<gene>
    <name evidence="1" type="primary">nadK</name>
    <name type="ordered locus">Dde_2618</name>
</gene>
<reference key="1">
    <citation type="journal article" date="2011" name="J. Bacteriol.">
        <title>Complete genome sequence and updated annotation of Desulfovibrio alaskensis G20.</title>
        <authorList>
            <person name="Hauser L.J."/>
            <person name="Land M.L."/>
            <person name="Brown S.D."/>
            <person name="Larimer F."/>
            <person name="Keller K.L."/>
            <person name="Rapp-Giles B.J."/>
            <person name="Price M.N."/>
            <person name="Lin M."/>
            <person name="Bruce D.C."/>
            <person name="Detter J.C."/>
            <person name="Tapia R."/>
            <person name="Han C.S."/>
            <person name="Goodwin L.A."/>
            <person name="Cheng J.F."/>
            <person name="Pitluck S."/>
            <person name="Copeland A."/>
            <person name="Lucas S."/>
            <person name="Nolan M."/>
            <person name="Lapidus A.L."/>
            <person name="Palumbo A.V."/>
            <person name="Wall J.D."/>
        </authorList>
    </citation>
    <scope>NUCLEOTIDE SEQUENCE [LARGE SCALE GENOMIC DNA]</scope>
    <source>
        <strain>ATCC BAA-1058 / DSM 17464 / G20</strain>
    </source>
</reference>
<sequence length="292" mass="30944">MHRELKRVFIVTKQAHAGAAALAADMQAWFAARGIEAATEENDTASALPDFARSASCIMVLGGDGTMLSVSRRAVGLDVPLLGVNLGKVGFLAEVSAAGWQQAFTRLAENGLTCSERLALHFAVSREGRCVFEGTAVNDVVLHRGVLARVINLGLGVDGEWLGDLRADGLIVSTPTGATGYAVSAGGPLVHPDMSVYAITPICPFLNNFHPMVLAGSMRFEIRILEGPQEVYVTQDGQECFALQAGDLVTVTQASRGLLFVAVEGSTYFTRLRAKGFVRDPRGRGRAVPASS</sequence>
<comment type="function">
    <text evidence="1">Involved in the regulation of the intracellular balance of NAD and NADP, and is a key enzyme in the biosynthesis of NADP. Catalyzes specifically the phosphorylation on 2'-hydroxyl of the adenosine moiety of NAD to yield NADP.</text>
</comment>
<comment type="catalytic activity">
    <reaction evidence="1">
        <text>NAD(+) + ATP = ADP + NADP(+) + H(+)</text>
        <dbReference type="Rhea" id="RHEA:18629"/>
        <dbReference type="ChEBI" id="CHEBI:15378"/>
        <dbReference type="ChEBI" id="CHEBI:30616"/>
        <dbReference type="ChEBI" id="CHEBI:57540"/>
        <dbReference type="ChEBI" id="CHEBI:58349"/>
        <dbReference type="ChEBI" id="CHEBI:456216"/>
        <dbReference type="EC" id="2.7.1.23"/>
    </reaction>
</comment>
<comment type="cofactor">
    <cofactor evidence="1">
        <name>a divalent metal cation</name>
        <dbReference type="ChEBI" id="CHEBI:60240"/>
    </cofactor>
</comment>
<comment type="subcellular location">
    <subcellularLocation>
        <location evidence="1">Cytoplasm</location>
    </subcellularLocation>
</comment>
<comment type="similarity">
    <text evidence="1">Belongs to the NAD kinase family.</text>
</comment>
<keyword id="KW-0067">ATP-binding</keyword>
<keyword id="KW-0963">Cytoplasm</keyword>
<keyword id="KW-0418">Kinase</keyword>
<keyword id="KW-0520">NAD</keyword>
<keyword id="KW-0521">NADP</keyword>
<keyword id="KW-0547">Nucleotide-binding</keyword>
<keyword id="KW-1185">Reference proteome</keyword>
<keyword id="KW-0808">Transferase</keyword>
<dbReference type="EC" id="2.7.1.23" evidence="1"/>
<dbReference type="EMBL" id="CP000112">
    <property type="protein sequence ID" value="ABB39414.1"/>
    <property type="molecule type" value="Genomic_DNA"/>
</dbReference>
<dbReference type="RefSeq" id="WP_011368451.1">
    <property type="nucleotide sequence ID" value="NC_007519.1"/>
</dbReference>
<dbReference type="SMR" id="Q30Y32"/>
<dbReference type="STRING" id="207559.Dde_2618"/>
<dbReference type="KEGG" id="dde:Dde_2618"/>
<dbReference type="eggNOG" id="COG0061">
    <property type="taxonomic scope" value="Bacteria"/>
</dbReference>
<dbReference type="HOGENOM" id="CLU_008831_0_0_7"/>
<dbReference type="Proteomes" id="UP000002710">
    <property type="component" value="Chromosome"/>
</dbReference>
<dbReference type="GO" id="GO:0005737">
    <property type="term" value="C:cytoplasm"/>
    <property type="evidence" value="ECO:0007669"/>
    <property type="project" value="UniProtKB-SubCell"/>
</dbReference>
<dbReference type="GO" id="GO:0005524">
    <property type="term" value="F:ATP binding"/>
    <property type="evidence" value="ECO:0007669"/>
    <property type="project" value="UniProtKB-KW"/>
</dbReference>
<dbReference type="GO" id="GO:0046872">
    <property type="term" value="F:metal ion binding"/>
    <property type="evidence" value="ECO:0007669"/>
    <property type="project" value="UniProtKB-UniRule"/>
</dbReference>
<dbReference type="GO" id="GO:0051287">
    <property type="term" value="F:NAD binding"/>
    <property type="evidence" value="ECO:0007669"/>
    <property type="project" value="UniProtKB-ARBA"/>
</dbReference>
<dbReference type="GO" id="GO:0003951">
    <property type="term" value="F:NAD+ kinase activity"/>
    <property type="evidence" value="ECO:0007669"/>
    <property type="project" value="UniProtKB-UniRule"/>
</dbReference>
<dbReference type="GO" id="GO:0019674">
    <property type="term" value="P:NAD metabolic process"/>
    <property type="evidence" value="ECO:0007669"/>
    <property type="project" value="InterPro"/>
</dbReference>
<dbReference type="GO" id="GO:0006741">
    <property type="term" value="P:NADP biosynthetic process"/>
    <property type="evidence" value="ECO:0007669"/>
    <property type="project" value="UniProtKB-UniRule"/>
</dbReference>
<dbReference type="Gene3D" id="3.40.50.10330">
    <property type="entry name" value="Probable inorganic polyphosphate/atp-NAD kinase, domain 1"/>
    <property type="match status" value="1"/>
</dbReference>
<dbReference type="Gene3D" id="2.60.200.30">
    <property type="entry name" value="Probable inorganic polyphosphate/atp-NAD kinase, domain 2"/>
    <property type="match status" value="1"/>
</dbReference>
<dbReference type="HAMAP" id="MF_00361">
    <property type="entry name" value="NAD_kinase"/>
    <property type="match status" value="1"/>
</dbReference>
<dbReference type="InterPro" id="IPR017438">
    <property type="entry name" value="ATP-NAD_kinase_N"/>
</dbReference>
<dbReference type="InterPro" id="IPR017437">
    <property type="entry name" value="ATP-NAD_kinase_PpnK-typ_C"/>
</dbReference>
<dbReference type="InterPro" id="IPR016064">
    <property type="entry name" value="NAD/diacylglycerol_kinase_sf"/>
</dbReference>
<dbReference type="InterPro" id="IPR002504">
    <property type="entry name" value="NADK"/>
</dbReference>
<dbReference type="PANTHER" id="PTHR20275">
    <property type="entry name" value="NAD KINASE"/>
    <property type="match status" value="1"/>
</dbReference>
<dbReference type="PANTHER" id="PTHR20275:SF0">
    <property type="entry name" value="NAD KINASE"/>
    <property type="match status" value="1"/>
</dbReference>
<dbReference type="Pfam" id="PF01513">
    <property type="entry name" value="NAD_kinase"/>
    <property type="match status" value="1"/>
</dbReference>
<dbReference type="Pfam" id="PF20143">
    <property type="entry name" value="NAD_kinase_C"/>
    <property type="match status" value="1"/>
</dbReference>
<dbReference type="SUPFAM" id="SSF111331">
    <property type="entry name" value="NAD kinase/diacylglycerol kinase-like"/>
    <property type="match status" value="1"/>
</dbReference>
<name>NADK_OLEA2</name>
<evidence type="ECO:0000255" key="1">
    <source>
        <dbReference type="HAMAP-Rule" id="MF_00361"/>
    </source>
</evidence>
<proteinExistence type="inferred from homology"/>
<feature type="chain" id="PRO_0000229633" description="NAD kinase">
    <location>
        <begin position="1"/>
        <end position="292"/>
    </location>
</feature>
<feature type="active site" description="Proton acceptor" evidence="1">
    <location>
        <position position="64"/>
    </location>
</feature>
<feature type="binding site" evidence="1">
    <location>
        <begin position="64"/>
        <end position="65"/>
    </location>
    <ligand>
        <name>NAD(+)</name>
        <dbReference type="ChEBI" id="CHEBI:57540"/>
    </ligand>
</feature>
<feature type="binding site" evidence="1">
    <location>
        <begin position="138"/>
        <end position="139"/>
    </location>
    <ligand>
        <name>NAD(+)</name>
        <dbReference type="ChEBI" id="CHEBI:57540"/>
    </ligand>
</feature>
<feature type="binding site" evidence="1">
    <location>
        <position position="149"/>
    </location>
    <ligand>
        <name>NAD(+)</name>
        <dbReference type="ChEBI" id="CHEBI:57540"/>
    </ligand>
</feature>
<feature type="binding site" evidence="1">
    <location>
        <position position="166"/>
    </location>
    <ligand>
        <name>NAD(+)</name>
        <dbReference type="ChEBI" id="CHEBI:57540"/>
    </ligand>
</feature>
<feature type="binding site" evidence="1">
    <location>
        <position position="168"/>
    </location>
    <ligand>
        <name>NAD(+)</name>
        <dbReference type="ChEBI" id="CHEBI:57540"/>
    </ligand>
</feature>
<feature type="binding site" evidence="1">
    <location>
        <begin position="179"/>
        <end position="184"/>
    </location>
    <ligand>
        <name>NAD(+)</name>
        <dbReference type="ChEBI" id="CHEBI:57540"/>
    </ligand>
</feature>
<feature type="binding site" evidence="1">
    <location>
        <position position="238"/>
    </location>
    <ligand>
        <name>NAD(+)</name>
        <dbReference type="ChEBI" id="CHEBI:57540"/>
    </ligand>
</feature>
<protein>
    <recommendedName>
        <fullName evidence="1">NAD kinase</fullName>
        <ecNumber evidence="1">2.7.1.23</ecNumber>
    </recommendedName>
    <alternativeName>
        <fullName evidence="1">ATP-dependent NAD kinase</fullName>
    </alternativeName>
</protein>
<accession>Q30Y32</accession>